<name>URED_CERS5</name>
<protein>
    <recommendedName>
        <fullName evidence="1">Urease accessory protein UreD</fullName>
    </recommendedName>
</protein>
<sequence>MNALTPPRDCLERSQGHAQVTLARVLGAVRLRDLAQRGSAKAFLPRVDGPVPEIVFLNTSGGLTGGDRLSYRLEVGEGCRAVATTQTAERAYAAGRGVAQVRVAHEVGAGGWLDWLPQETILFEDSALDRRTEIVLGPGAGCLMVESVVLGRAAMGETLSRLAFRDLRQITRGGRPVLVEPLALDDRALAAAAGAAVLGGLRALATLALVGPGAEDALGPARAVLDEPGVEAAASAFDGKLLVRMLALDGWPLRRQVARVLGVLRGRALPRVWQD</sequence>
<evidence type="ECO:0000255" key="1">
    <source>
        <dbReference type="HAMAP-Rule" id="MF_01384"/>
    </source>
</evidence>
<keyword id="KW-0143">Chaperone</keyword>
<keyword id="KW-0963">Cytoplasm</keyword>
<keyword id="KW-0996">Nickel insertion</keyword>
<comment type="function">
    <text evidence="1">Required for maturation of urease via the functional incorporation of the urease nickel metallocenter.</text>
</comment>
<comment type="subunit">
    <text evidence="1">UreD, UreF and UreG form a complex that acts as a GTP-hydrolysis-dependent molecular chaperone, activating the urease apoprotein by helping to assemble the nickel containing metallocenter of UreC. The UreE protein probably delivers the nickel.</text>
</comment>
<comment type="subcellular location">
    <subcellularLocation>
        <location evidence="1">Cytoplasm</location>
    </subcellularLocation>
</comment>
<comment type="similarity">
    <text evidence="1">Belongs to the UreD family.</text>
</comment>
<gene>
    <name evidence="1" type="primary">ureD</name>
    <name type="ordered locus">Rsph17025_0984</name>
</gene>
<accession>A4WR71</accession>
<dbReference type="EMBL" id="CP000661">
    <property type="protein sequence ID" value="ABP69885.1"/>
    <property type="molecule type" value="Genomic_DNA"/>
</dbReference>
<dbReference type="SMR" id="A4WR71"/>
<dbReference type="STRING" id="349102.Rsph17025_0984"/>
<dbReference type="KEGG" id="rsq:Rsph17025_0984"/>
<dbReference type="eggNOG" id="COG0829">
    <property type="taxonomic scope" value="Bacteria"/>
</dbReference>
<dbReference type="HOGENOM" id="CLU_056339_2_0_5"/>
<dbReference type="BioCyc" id="RSPH349102:G1G8M-1010-MONOMER"/>
<dbReference type="GO" id="GO:0005737">
    <property type="term" value="C:cytoplasm"/>
    <property type="evidence" value="ECO:0007669"/>
    <property type="project" value="UniProtKB-SubCell"/>
</dbReference>
<dbReference type="GO" id="GO:0016151">
    <property type="term" value="F:nickel cation binding"/>
    <property type="evidence" value="ECO:0007669"/>
    <property type="project" value="UniProtKB-UniRule"/>
</dbReference>
<dbReference type="HAMAP" id="MF_01384">
    <property type="entry name" value="UreD"/>
    <property type="match status" value="1"/>
</dbReference>
<dbReference type="InterPro" id="IPR002669">
    <property type="entry name" value="UreD"/>
</dbReference>
<dbReference type="PANTHER" id="PTHR33643">
    <property type="entry name" value="UREASE ACCESSORY PROTEIN D"/>
    <property type="match status" value="1"/>
</dbReference>
<dbReference type="PANTHER" id="PTHR33643:SF1">
    <property type="entry name" value="UREASE ACCESSORY PROTEIN D"/>
    <property type="match status" value="1"/>
</dbReference>
<dbReference type="Pfam" id="PF01774">
    <property type="entry name" value="UreD"/>
    <property type="match status" value="1"/>
</dbReference>
<reference key="1">
    <citation type="submission" date="2007-04" db="EMBL/GenBank/DDBJ databases">
        <title>Complete sequence of chromosome of Rhodobacter sphaeroides ATCC 17025.</title>
        <authorList>
            <consortium name="US DOE Joint Genome Institute"/>
            <person name="Copeland A."/>
            <person name="Lucas S."/>
            <person name="Lapidus A."/>
            <person name="Barry K."/>
            <person name="Detter J.C."/>
            <person name="Glavina del Rio T."/>
            <person name="Hammon N."/>
            <person name="Israni S."/>
            <person name="Dalin E."/>
            <person name="Tice H."/>
            <person name="Pitluck S."/>
            <person name="Chertkov O."/>
            <person name="Brettin T."/>
            <person name="Bruce D."/>
            <person name="Han C."/>
            <person name="Schmutz J."/>
            <person name="Larimer F."/>
            <person name="Land M."/>
            <person name="Hauser L."/>
            <person name="Kyrpides N."/>
            <person name="Kim E."/>
            <person name="Richardson P."/>
            <person name="Mackenzie C."/>
            <person name="Choudhary M."/>
            <person name="Donohue T.J."/>
            <person name="Kaplan S."/>
        </authorList>
    </citation>
    <scope>NUCLEOTIDE SEQUENCE [LARGE SCALE GENOMIC DNA]</scope>
    <source>
        <strain>ATCC 17025 / ATH 2.4.3</strain>
    </source>
</reference>
<proteinExistence type="inferred from homology"/>
<organism>
    <name type="scientific">Cereibacter sphaeroides (strain ATCC 17025 / ATH 2.4.3)</name>
    <name type="common">Rhodobacter sphaeroides</name>
    <dbReference type="NCBI Taxonomy" id="349102"/>
    <lineage>
        <taxon>Bacteria</taxon>
        <taxon>Pseudomonadati</taxon>
        <taxon>Pseudomonadota</taxon>
        <taxon>Alphaproteobacteria</taxon>
        <taxon>Rhodobacterales</taxon>
        <taxon>Paracoccaceae</taxon>
        <taxon>Cereibacter</taxon>
    </lineage>
</organism>
<feature type="chain" id="PRO_0000340506" description="Urease accessory protein UreD">
    <location>
        <begin position="1"/>
        <end position="275"/>
    </location>
</feature>